<accession>P9WKV8</accession>
<accession>L0T3V4</accession>
<accession>P64697</accession>
<accession>Q11144</accession>
<keyword id="KW-1185">Reference proteome</keyword>
<keyword id="KW-0732">Signal</keyword>
<reference key="1">
    <citation type="journal article" date="2002" name="J. Bacteriol.">
        <title>Whole-genome comparison of Mycobacterium tuberculosis clinical and laboratory strains.</title>
        <authorList>
            <person name="Fleischmann R.D."/>
            <person name="Alland D."/>
            <person name="Eisen J.A."/>
            <person name="Carpenter L."/>
            <person name="White O."/>
            <person name="Peterson J.D."/>
            <person name="DeBoy R.T."/>
            <person name="Dodson R.J."/>
            <person name="Gwinn M.L."/>
            <person name="Haft D.H."/>
            <person name="Hickey E.K."/>
            <person name="Kolonay J.F."/>
            <person name="Nelson W.C."/>
            <person name="Umayam L.A."/>
            <person name="Ermolaeva M.D."/>
            <person name="Salzberg S.L."/>
            <person name="Delcher A."/>
            <person name="Utterback T.R."/>
            <person name="Weidman J.F."/>
            <person name="Khouri H.M."/>
            <person name="Gill J."/>
            <person name="Mikula A."/>
            <person name="Bishai W."/>
            <person name="Jacobs W.R. Jr."/>
            <person name="Venter J.C."/>
            <person name="Fraser C.M."/>
        </authorList>
    </citation>
    <scope>NUCLEOTIDE SEQUENCE [LARGE SCALE GENOMIC DNA]</scope>
    <source>
        <strain>CDC 1551 / Oshkosh</strain>
    </source>
</reference>
<sequence length="148" mass="15659">MKALVAVSAVAVVALLGVSSAQADPEADPGAGEANYGGPPSSPRLVDHTEWAQWGSLPSLRVYPSQVGRTASRRLGMAAADAAWAEVLALSPEADTAGMRAQFICHWQYAEIRQPGKPSWNLEPWRPVVDDSEMLASGCNPGSPEESF</sequence>
<feature type="signal peptide" evidence="1">
    <location>
        <begin position="1"/>
        <end position="23"/>
    </location>
</feature>
<feature type="chain" id="PRO_0000427586" description="Uncharacterized protein MT0495">
    <location>
        <begin position="24"/>
        <end position="148"/>
    </location>
</feature>
<feature type="region of interest" description="Disordered" evidence="2">
    <location>
        <begin position="22"/>
        <end position="45"/>
    </location>
</feature>
<evidence type="ECO:0000255" key="1"/>
<evidence type="ECO:0000256" key="2">
    <source>
        <dbReference type="SAM" id="MobiDB-lite"/>
    </source>
</evidence>
<evidence type="ECO:0000305" key="3"/>
<dbReference type="EMBL" id="AE000516">
    <property type="protein sequence ID" value="AAK44718.1"/>
    <property type="status" value="ALT_INIT"/>
    <property type="molecule type" value="Genomic_DNA"/>
</dbReference>
<dbReference type="PIR" id="H70742">
    <property type="entry name" value="H70742"/>
</dbReference>
<dbReference type="RefSeq" id="WP_003402344.1">
    <property type="nucleotide sequence ID" value="NZ_KK341227.1"/>
</dbReference>
<dbReference type="KEGG" id="mtc:MT0495"/>
<dbReference type="PATRIC" id="fig|83331.31.peg.524"/>
<dbReference type="HOGENOM" id="CLU_127583_1_0_11"/>
<dbReference type="Proteomes" id="UP000001020">
    <property type="component" value="Chromosome"/>
</dbReference>
<dbReference type="InterPro" id="IPR019719">
    <property type="entry name" value="DUF2599"/>
</dbReference>
<dbReference type="Pfam" id="PF10783">
    <property type="entry name" value="DUF2599"/>
    <property type="match status" value="1"/>
</dbReference>
<proteinExistence type="inferred from homology"/>
<gene>
    <name type="ordered locus">MT0495</name>
</gene>
<protein>
    <recommendedName>
        <fullName>Uncharacterized protein MT0495</fullName>
    </recommendedName>
</protein>
<name>Y477_MYCTO</name>
<comment type="similarity">
    <text evidence="3">To M.leprae ML2452.</text>
</comment>
<comment type="sequence caution" evidence="3">
    <conflict type="erroneous initiation">
        <sequence resource="EMBL-CDS" id="AAK44718"/>
    </conflict>
</comment>
<organism>
    <name type="scientific">Mycobacterium tuberculosis (strain CDC 1551 / Oshkosh)</name>
    <dbReference type="NCBI Taxonomy" id="83331"/>
    <lineage>
        <taxon>Bacteria</taxon>
        <taxon>Bacillati</taxon>
        <taxon>Actinomycetota</taxon>
        <taxon>Actinomycetes</taxon>
        <taxon>Mycobacteriales</taxon>
        <taxon>Mycobacteriaceae</taxon>
        <taxon>Mycobacterium</taxon>
        <taxon>Mycobacterium tuberculosis complex</taxon>
    </lineage>
</organism>